<reference key="1">
    <citation type="journal article" date="1994" name="Mol. Gen. Genet.">
        <title>Nitrate reductase of the ascomycetous fungus, Leptosphaeria maculans: gene sequence and chromosomal location.</title>
        <authorList>
            <person name="Williams R.S.B."/>
            <person name="Davis M.A."/>
            <person name="Howlett B.J."/>
        </authorList>
    </citation>
    <scope>NUCLEOTIDE SEQUENCE [GENOMIC DNA]</scope>
    <source>
        <strain>Isolate 19</strain>
    </source>
</reference>
<reference key="2">
    <citation type="journal article" date="1995" name="Gene">
        <title>The nitrate and nitrite reductase-encoding genes of Leptosphaeria maculans are closely linked and transcribed in the same direction.</title>
        <authorList>
            <person name="Williams R.S.B."/>
            <person name="Davis M.A."/>
            <person name="Howlett B.J."/>
        </authorList>
    </citation>
    <scope>NUCLEOTIDE SEQUENCE [GENOMIC DNA] OF 886-893</scope>
    <source>
        <strain>Isolate 19</strain>
    </source>
</reference>
<keyword id="KW-1015">Disulfide bond</keyword>
<keyword id="KW-0274">FAD</keyword>
<keyword id="KW-0285">Flavoprotein</keyword>
<keyword id="KW-0349">Heme</keyword>
<keyword id="KW-0408">Iron</keyword>
<keyword id="KW-0479">Metal-binding</keyword>
<keyword id="KW-0500">Molybdenum</keyword>
<keyword id="KW-0521">NADP</keyword>
<keyword id="KW-0534">Nitrate assimilation</keyword>
<keyword id="KW-0560">Oxidoreductase</keyword>
<protein>
    <recommendedName>
        <fullName>Nitrate reductase [NADPH]</fullName>
        <shortName>NR</shortName>
        <ecNumber>1.7.1.3</ecNumber>
    </recommendedName>
</protein>
<feature type="chain" id="PRO_0000166045" description="Nitrate reductase [NADPH]">
    <location>
        <begin position="1"/>
        <end position="893"/>
    </location>
</feature>
<feature type="domain" description="Cytochrome b5 heme-binding" evidence="6">
    <location>
        <begin position="536"/>
        <end position="611"/>
    </location>
</feature>
<feature type="domain" description="FAD-binding FR-type" evidence="7">
    <location>
        <begin position="641"/>
        <end position="752"/>
    </location>
</feature>
<feature type="region of interest" description="Disordered" evidence="8">
    <location>
        <begin position="1"/>
        <end position="83"/>
    </location>
</feature>
<feature type="compositionally biased region" description="Pro residues" evidence="8">
    <location>
        <begin position="55"/>
        <end position="65"/>
    </location>
</feature>
<feature type="compositionally biased region" description="Basic and acidic residues" evidence="8">
    <location>
        <begin position="71"/>
        <end position="83"/>
    </location>
</feature>
<feature type="binding site" evidence="4">
    <location>
        <position position="170"/>
    </location>
    <ligand>
        <name>Mo-molybdopterin</name>
        <dbReference type="ChEBI" id="CHEBI:71302"/>
    </ligand>
    <ligandPart>
        <name>Mo</name>
        <dbReference type="ChEBI" id="CHEBI:28685"/>
    </ligandPart>
</feature>
<feature type="binding site" description="axial binding residue" evidence="6">
    <location>
        <position position="571"/>
    </location>
    <ligand>
        <name>heme</name>
        <dbReference type="ChEBI" id="CHEBI:30413"/>
    </ligand>
    <ligandPart>
        <name>Fe</name>
        <dbReference type="ChEBI" id="CHEBI:18248"/>
    </ligandPart>
</feature>
<feature type="binding site" description="axial binding residue" evidence="6">
    <location>
        <position position="594"/>
    </location>
    <ligand>
        <name>heme</name>
        <dbReference type="ChEBI" id="CHEBI:30413"/>
    </ligand>
    <ligandPart>
        <name>Fe</name>
        <dbReference type="ChEBI" id="CHEBI:18248"/>
    </ligandPart>
</feature>
<feature type="binding site" evidence="2">
    <location>
        <begin position="695"/>
        <end position="698"/>
    </location>
    <ligand>
        <name>FAD</name>
        <dbReference type="ChEBI" id="CHEBI:57692"/>
    </ligand>
</feature>
<feature type="binding site" evidence="2">
    <location>
        <begin position="712"/>
        <end position="716"/>
    </location>
    <ligand>
        <name>FAD</name>
        <dbReference type="ChEBI" id="CHEBI:57692"/>
    </ligand>
</feature>
<feature type="binding site" evidence="2">
    <location>
        <begin position="726"/>
        <end position="728"/>
    </location>
    <ligand>
        <name>FAD</name>
        <dbReference type="ChEBI" id="CHEBI:57692"/>
    </ligand>
</feature>
<feature type="binding site" evidence="3">
    <location>
        <position position="776"/>
    </location>
    <ligand>
        <name>FAD</name>
        <dbReference type="ChEBI" id="CHEBI:57692"/>
    </ligand>
</feature>
<feature type="binding site" evidence="2">
    <location>
        <position position="779"/>
    </location>
    <ligand>
        <name>FAD</name>
        <dbReference type="ChEBI" id="CHEBI:57692"/>
    </ligand>
</feature>
<feature type="binding site" evidence="1">
    <location>
        <begin position="863"/>
        <end position="872"/>
    </location>
    <ligand>
        <name>NADP(+)</name>
        <dbReference type="ChEBI" id="CHEBI:58349"/>
    </ligand>
</feature>
<feature type="disulfide bond" description="Interchain" evidence="5">
    <location>
        <position position="418"/>
    </location>
</feature>
<proteinExistence type="inferred from homology"/>
<comment type="function">
    <text>Nitrate reductase is a key enzyme involved in the first step of nitrate assimilation in plants, fungi and bacteria.</text>
</comment>
<comment type="catalytic activity">
    <reaction>
        <text>nitrite + NADP(+) + H2O = nitrate + NADPH + H(+)</text>
        <dbReference type="Rhea" id="RHEA:19061"/>
        <dbReference type="ChEBI" id="CHEBI:15377"/>
        <dbReference type="ChEBI" id="CHEBI:15378"/>
        <dbReference type="ChEBI" id="CHEBI:16301"/>
        <dbReference type="ChEBI" id="CHEBI:17632"/>
        <dbReference type="ChEBI" id="CHEBI:57783"/>
        <dbReference type="ChEBI" id="CHEBI:58349"/>
        <dbReference type="EC" id="1.7.1.3"/>
    </reaction>
</comment>
<comment type="cofactor">
    <cofactor evidence="1">
        <name>FAD</name>
        <dbReference type="ChEBI" id="CHEBI:57692"/>
    </cofactor>
    <text evidence="1">Binds 1 FAD.</text>
</comment>
<comment type="cofactor">
    <cofactor evidence="1">
        <name>heme</name>
        <dbReference type="ChEBI" id="CHEBI:30413"/>
    </cofactor>
    <text evidence="1">Binds 1 heme group. The heme group is called cytochrome b-557.</text>
</comment>
<comment type="cofactor">
    <cofactor evidence="1">
        <name>Mo-molybdopterin</name>
        <dbReference type="ChEBI" id="CHEBI:71302"/>
    </cofactor>
    <text evidence="1">Binds 1 Mo-molybdopterin (Mo-MPT) cofactor per subunit.</text>
</comment>
<comment type="subunit">
    <text evidence="1">Homodimer.</text>
</comment>
<comment type="similarity">
    <text evidence="9">Belongs to the nitrate reductase family.</text>
</comment>
<evidence type="ECO:0000250" key="1"/>
<evidence type="ECO:0000250" key="2">
    <source>
        <dbReference type="UniProtKB" id="A0A286R227"/>
    </source>
</evidence>
<evidence type="ECO:0000250" key="3">
    <source>
        <dbReference type="UniProtKB" id="P17571"/>
    </source>
</evidence>
<evidence type="ECO:0000250" key="4">
    <source>
        <dbReference type="UniProtKB" id="P49050"/>
    </source>
</evidence>
<evidence type="ECO:0000255" key="5"/>
<evidence type="ECO:0000255" key="6">
    <source>
        <dbReference type="PROSITE-ProRule" id="PRU00279"/>
    </source>
</evidence>
<evidence type="ECO:0000255" key="7">
    <source>
        <dbReference type="PROSITE-ProRule" id="PRU00716"/>
    </source>
</evidence>
<evidence type="ECO:0000256" key="8">
    <source>
        <dbReference type="SAM" id="MobiDB-lite"/>
    </source>
</evidence>
<evidence type="ECO:0000305" key="9"/>
<sequence>MSVTTQQPAVVPLPSSPRLPIESHAGPRSTQLPPSPPETVNGDDPKSITSTPAEPDFPLPPPANPKPQVLDIDKPTPDAHVPRDPRLIRLTGVHPFNTEPPLTDLYNEGFLTSPELFYVRNHGAVPEVQDEECLDWEFSIEGMVANPLKITLRQLLEEYENVTYPVTLVCAGNRRKEQNVVRKSKGFAWGAAGVSTALFTGVVMKDVIERAKPLRKAKYVCMEGADKLPNGYYGTSVKLNWVMDPNRGIMLAHKMNGENLSLDHGKPLRAVVPGQIGGRSVKWLKKLIVTAEPSDNWYHIYDNRVLPTMVDPDEAAKNPKWWMDERYAIYDLSPNSAIAFPAHEEKVVLASAENSYNVRGYAYSGGGRRITRCEVSLNKGKNWRLANIDYAEDKYRDFEGRELFGARLDMDWRETSFCWCFWNLDIATAELRDANDILVRAMDEAMCIQPRDMYWSVLGMMNNPWYRITIHHEGDVLRFEHPTQPALIPGGWMERVKKAGGNLTNGQWGEQIEGQELENTAVEEVKEIKMTKDGVNRIVELDELKWHESAEYPWFVVNDEVYDGTSFLEGHPGGAQSIISAAGLDASDEFMAIHSETAKAMMPAYHIGTLSPTASKQLSLEEPTSKQASSSSLRPTFLDSRTWSKALLSSKTKVSWDTRIFRFKLDHASQTLGLPTGQHLMIRLRDPVTREAIIRSYTPISQISEQGFCDVLIKIYADAPGREGGKMTKALDSIPCGHWVDMKGPIGKFEYLGKGVCSINGNERRVRSMKMICGGSGITPIYQVLRAILQDSADSTHCTVLNGNRLEEDILCREDLDRFAEENGERCTLVHTLTQAAEGWTGRRGRIGEELLKEFCGTEEDGLVLVCGPEGLERSVKGLLSGMAWRDDDVIFF</sequence>
<dbReference type="EC" id="1.7.1.3"/>
<dbReference type="EMBL" id="U04445">
    <property type="protein sequence ID" value="AAA50579.1"/>
    <property type="molecule type" value="Genomic_DNA"/>
</dbReference>
<dbReference type="EMBL" id="U18793">
    <property type="protein sequence ID" value="AAA82740.1"/>
    <property type="molecule type" value="Genomic_DNA"/>
</dbReference>
<dbReference type="PIR" id="S46442">
    <property type="entry name" value="S46442"/>
</dbReference>
<dbReference type="SMR" id="P36842"/>
<dbReference type="GO" id="GO:0071949">
    <property type="term" value="F:FAD binding"/>
    <property type="evidence" value="ECO:0000250"/>
    <property type="project" value="UniProtKB"/>
</dbReference>
<dbReference type="GO" id="GO:0020037">
    <property type="term" value="F:heme binding"/>
    <property type="evidence" value="ECO:0007669"/>
    <property type="project" value="InterPro"/>
</dbReference>
<dbReference type="GO" id="GO:0030151">
    <property type="term" value="F:molybdenum ion binding"/>
    <property type="evidence" value="ECO:0000250"/>
    <property type="project" value="UniProtKB"/>
</dbReference>
<dbReference type="GO" id="GO:0043546">
    <property type="term" value="F:molybdopterin cofactor binding"/>
    <property type="evidence" value="ECO:0007669"/>
    <property type="project" value="InterPro"/>
</dbReference>
<dbReference type="GO" id="GO:0050464">
    <property type="term" value="F:nitrate reductase (NADPH) activity"/>
    <property type="evidence" value="ECO:0007669"/>
    <property type="project" value="UniProtKB-EC"/>
</dbReference>
<dbReference type="GO" id="GO:0008482">
    <property type="term" value="F:sulfite oxidase activity"/>
    <property type="evidence" value="ECO:0007669"/>
    <property type="project" value="TreeGrafter"/>
</dbReference>
<dbReference type="GO" id="GO:0042128">
    <property type="term" value="P:nitrate assimilation"/>
    <property type="evidence" value="ECO:0007669"/>
    <property type="project" value="UniProtKB-KW"/>
</dbReference>
<dbReference type="GO" id="GO:0006809">
    <property type="term" value="P:nitric oxide biosynthetic process"/>
    <property type="evidence" value="ECO:0007669"/>
    <property type="project" value="InterPro"/>
</dbReference>
<dbReference type="GO" id="GO:0006790">
    <property type="term" value="P:sulfur compound metabolic process"/>
    <property type="evidence" value="ECO:0007669"/>
    <property type="project" value="TreeGrafter"/>
</dbReference>
<dbReference type="CDD" id="cd06183">
    <property type="entry name" value="cyt_b5_reduct_like"/>
    <property type="match status" value="1"/>
</dbReference>
<dbReference type="FunFam" id="3.10.120.10:FF:000016">
    <property type="entry name" value="Nitrate reductase"/>
    <property type="match status" value="1"/>
</dbReference>
<dbReference type="FunFam" id="3.90.420.10:FF:000005">
    <property type="entry name" value="Nitrate reductase"/>
    <property type="match status" value="1"/>
</dbReference>
<dbReference type="Gene3D" id="2.60.40.650">
    <property type="match status" value="1"/>
</dbReference>
<dbReference type="Gene3D" id="3.10.120.10">
    <property type="entry name" value="Cytochrome b5-like heme/steroid binding domain"/>
    <property type="match status" value="1"/>
</dbReference>
<dbReference type="Gene3D" id="3.40.50.80">
    <property type="entry name" value="Nucleotide-binding domain of ferredoxin-NADP reductase (FNR) module"/>
    <property type="match status" value="1"/>
</dbReference>
<dbReference type="Gene3D" id="3.90.420.10">
    <property type="entry name" value="Oxidoreductase, molybdopterin-binding domain"/>
    <property type="match status" value="1"/>
</dbReference>
<dbReference type="Gene3D" id="2.40.30.10">
    <property type="entry name" value="Translation factors"/>
    <property type="match status" value="1"/>
</dbReference>
<dbReference type="InterPro" id="IPR008333">
    <property type="entry name" value="Cbr1-like_FAD-bd_dom"/>
</dbReference>
<dbReference type="InterPro" id="IPR001199">
    <property type="entry name" value="Cyt_B5-like_heme/steroid-bd"/>
</dbReference>
<dbReference type="InterPro" id="IPR036400">
    <property type="entry name" value="Cyt_B5-like_heme/steroid_sf"/>
</dbReference>
<dbReference type="InterPro" id="IPR018506">
    <property type="entry name" value="Cyt_B5_heme-BS"/>
</dbReference>
<dbReference type="InterPro" id="IPR017927">
    <property type="entry name" value="FAD-bd_FR_type"/>
</dbReference>
<dbReference type="InterPro" id="IPR001709">
    <property type="entry name" value="Flavoprot_Pyr_Nucl_cyt_Rdtase"/>
</dbReference>
<dbReference type="InterPro" id="IPR039261">
    <property type="entry name" value="FNR_nucleotide-bd"/>
</dbReference>
<dbReference type="InterPro" id="IPR014756">
    <property type="entry name" value="Ig_E-set"/>
</dbReference>
<dbReference type="InterPro" id="IPR005066">
    <property type="entry name" value="MoCF_OxRdtse_dimer"/>
</dbReference>
<dbReference type="InterPro" id="IPR008335">
    <property type="entry name" value="Mopterin_OxRdtase_euk"/>
</dbReference>
<dbReference type="InterPro" id="IPR012137">
    <property type="entry name" value="Nitr_rd_NADH"/>
</dbReference>
<dbReference type="InterPro" id="IPR001433">
    <property type="entry name" value="OxRdtase_FAD/NAD-bd"/>
</dbReference>
<dbReference type="InterPro" id="IPR000572">
    <property type="entry name" value="OxRdtase_Mopterin-bd_dom"/>
</dbReference>
<dbReference type="InterPro" id="IPR036374">
    <property type="entry name" value="OxRdtase_Mopterin-bd_sf"/>
</dbReference>
<dbReference type="InterPro" id="IPR022407">
    <property type="entry name" value="OxRdtase_Mopterin_BS"/>
</dbReference>
<dbReference type="InterPro" id="IPR017938">
    <property type="entry name" value="Riboflavin_synthase-like_b-brl"/>
</dbReference>
<dbReference type="PANTHER" id="PTHR19372:SF7">
    <property type="entry name" value="SULFITE OXIDASE, MITOCHONDRIAL"/>
    <property type="match status" value="1"/>
</dbReference>
<dbReference type="PANTHER" id="PTHR19372">
    <property type="entry name" value="SULFITE REDUCTASE"/>
    <property type="match status" value="1"/>
</dbReference>
<dbReference type="Pfam" id="PF00173">
    <property type="entry name" value="Cyt-b5"/>
    <property type="match status" value="1"/>
</dbReference>
<dbReference type="Pfam" id="PF00970">
    <property type="entry name" value="FAD_binding_6"/>
    <property type="match status" value="1"/>
</dbReference>
<dbReference type="Pfam" id="PF03404">
    <property type="entry name" value="Mo-co_dimer"/>
    <property type="match status" value="1"/>
</dbReference>
<dbReference type="Pfam" id="PF00175">
    <property type="entry name" value="NAD_binding_1"/>
    <property type="match status" value="1"/>
</dbReference>
<dbReference type="Pfam" id="PF00174">
    <property type="entry name" value="Oxidored_molyb"/>
    <property type="match status" value="1"/>
</dbReference>
<dbReference type="PIRSF" id="PIRSF000233">
    <property type="entry name" value="Nitr_rd_NADH"/>
    <property type="match status" value="1"/>
</dbReference>
<dbReference type="PRINTS" id="PR00406">
    <property type="entry name" value="CYTB5RDTASE"/>
</dbReference>
<dbReference type="PRINTS" id="PR00363">
    <property type="entry name" value="CYTOCHROMEB5"/>
</dbReference>
<dbReference type="PRINTS" id="PR00407">
    <property type="entry name" value="EUMOPTERIN"/>
</dbReference>
<dbReference type="PRINTS" id="PR00371">
    <property type="entry name" value="FPNCR"/>
</dbReference>
<dbReference type="SMART" id="SM01117">
    <property type="entry name" value="Cyt-b5"/>
    <property type="match status" value="1"/>
</dbReference>
<dbReference type="SUPFAM" id="SSF55856">
    <property type="entry name" value="Cytochrome b5-like heme/steroid binding domain"/>
    <property type="match status" value="1"/>
</dbReference>
<dbReference type="SUPFAM" id="SSF81296">
    <property type="entry name" value="E set domains"/>
    <property type="match status" value="1"/>
</dbReference>
<dbReference type="SUPFAM" id="SSF52343">
    <property type="entry name" value="Ferredoxin reductase-like, C-terminal NADP-linked domain"/>
    <property type="match status" value="1"/>
</dbReference>
<dbReference type="SUPFAM" id="SSF56524">
    <property type="entry name" value="Oxidoreductase molybdopterin-binding domain"/>
    <property type="match status" value="1"/>
</dbReference>
<dbReference type="SUPFAM" id="SSF63380">
    <property type="entry name" value="Riboflavin synthase domain-like"/>
    <property type="match status" value="1"/>
</dbReference>
<dbReference type="PROSITE" id="PS00191">
    <property type="entry name" value="CYTOCHROME_B5_1"/>
    <property type="match status" value="1"/>
</dbReference>
<dbReference type="PROSITE" id="PS50255">
    <property type="entry name" value="CYTOCHROME_B5_2"/>
    <property type="match status" value="1"/>
</dbReference>
<dbReference type="PROSITE" id="PS51384">
    <property type="entry name" value="FAD_FR"/>
    <property type="match status" value="1"/>
</dbReference>
<dbReference type="PROSITE" id="PS00559">
    <property type="entry name" value="MOLYBDOPTERIN_EUK"/>
    <property type="match status" value="1"/>
</dbReference>
<organism>
    <name type="scientific">Leptosphaeria maculans</name>
    <name type="common">Blackleg fungus</name>
    <name type="synonym">Phoma lingam</name>
    <dbReference type="NCBI Taxonomy" id="5022"/>
    <lineage>
        <taxon>Eukaryota</taxon>
        <taxon>Fungi</taxon>
        <taxon>Dikarya</taxon>
        <taxon>Ascomycota</taxon>
        <taxon>Pezizomycotina</taxon>
        <taxon>Dothideomycetes</taxon>
        <taxon>Pleosporomycetidae</taxon>
        <taxon>Pleosporales</taxon>
        <taxon>Pleosporineae</taxon>
        <taxon>Leptosphaeriaceae</taxon>
        <taxon>Plenodomus</taxon>
        <taxon>Plenodomus lingam/Leptosphaeria maculans species complex</taxon>
    </lineage>
</organism>
<gene>
    <name type="primary">NIAD</name>
</gene>
<accession>P36842</accession>
<name>NIA_LEPMC</name>